<gene>
    <name evidence="1" type="primary">mnmG</name>
    <name evidence="1" type="synonym">gidA</name>
    <name type="ordered locus">SSON_3878</name>
</gene>
<name>MNMG_SHISS</name>
<protein>
    <recommendedName>
        <fullName evidence="1">tRNA uridine 5-carboxymethylaminomethyl modification enzyme MnmG</fullName>
    </recommendedName>
    <alternativeName>
        <fullName evidence="1">Glucose-inhibited division protein A</fullName>
    </alternativeName>
</protein>
<sequence length="629" mass="69549">MFYPDPFDVIIIGGGHAGTEAAMAAARMGQQTLLLTHNIDTLGQMSCNPAIGGIGKGHLVKEVDALGGLMAKAIDQAGIQFRILNASKGPAVRATRAQADRVLYRQAVRTALENQPNLMIFQQAVEDLIVENDRVVGAVTQMGLKFRAKAVVLTVGTFLDGKIHIGLDNYSGGRAGDPPSIPLSRRLRELPLRVGRLKTGTPPRIDARTIDFSVLAQQHGDNPMPVFSFMGNASQHPQQVPCYITHTNEKTHDVIRSNLDRSPMYAGVIEGVGPRYCPSIEDKVMRFADRNQHQIFLEPEGLTSNEIYPNGISTSLPFDVQMQIVRSMQGMENAKIVRPGYAIEYDFFDPRDLKPTLESKFIQGLFFAGQINGTTGYEEAAAQGLLVGLNAARLSADKEGWAPARSQAYLGVLVDDLCTLGTKEPYRMFTSRAEYRLMLREDNADLRLTEIGRELGLVDDERWARFNEKLENIERERQRLKSTWVTPSAEAAAEVNAHLTAPLSREASGEDLLRRPEMTYEKLTTLTPFAPALTDEQAAEQVEIQVKYEGYIARQQDEIEKQLRNENTLLPATLDYRQVSGLSNEVIAKLNDHKPASIGQASRISGVTPAAISILLVWLKKQGMLRRSA</sequence>
<comment type="function">
    <text evidence="1">NAD-binding protein involved in the addition of a carboxymethylaminomethyl (cmnm) group at the wobble position (U34) of certain tRNAs, forming tRNA-cmnm(5)s(2)U34.</text>
</comment>
<comment type="cofactor">
    <cofactor evidence="1">
        <name>FAD</name>
        <dbReference type="ChEBI" id="CHEBI:57692"/>
    </cofactor>
</comment>
<comment type="subunit">
    <text evidence="1">Homodimer. Heterotetramer of two MnmE and two MnmG subunits.</text>
</comment>
<comment type="subcellular location">
    <subcellularLocation>
        <location evidence="1">Cytoplasm</location>
    </subcellularLocation>
</comment>
<comment type="similarity">
    <text evidence="1">Belongs to the MnmG family.</text>
</comment>
<evidence type="ECO:0000255" key="1">
    <source>
        <dbReference type="HAMAP-Rule" id="MF_00129"/>
    </source>
</evidence>
<reference key="1">
    <citation type="journal article" date="2005" name="Nucleic Acids Res.">
        <title>Genome dynamics and diversity of Shigella species, the etiologic agents of bacillary dysentery.</title>
        <authorList>
            <person name="Yang F."/>
            <person name="Yang J."/>
            <person name="Zhang X."/>
            <person name="Chen L."/>
            <person name="Jiang Y."/>
            <person name="Yan Y."/>
            <person name="Tang X."/>
            <person name="Wang J."/>
            <person name="Xiong Z."/>
            <person name="Dong J."/>
            <person name="Xue Y."/>
            <person name="Zhu Y."/>
            <person name="Xu X."/>
            <person name="Sun L."/>
            <person name="Chen S."/>
            <person name="Nie H."/>
            <person name="Peng J."/>
            <person name="Xu J."/>
            <person name="Wang Y."/>
            <person name="Yuan Z."/>
            <person name="Wen Y."/>
            <person name="Yao Z."/>
            <person name="Shen Y."/>
            <person name="Qiang B."/>
            <person name="Hou Y."/>
            <person name="Yu J."/>
            <person name="Jin Q."/>
        </authorList>
    </citation>
    <scope>NUCLEOTIDE SEQUENCE [LARGE SCALE GENOMIC DNA]</scope>
    <source>
        <strain>Ss046</strain>
    </source>
</reference>
<dbReference type="EMBL" id="CP000038">
    <property type="protein sequence ID" value="AAZ90417.1"/>
    <property type="molecule type" value="Genomic_DNA"/>
</dbReference>
<dbReference type="RefSeq" id="WP_000499795.1">
    <property type="nucleotide sequence ID" value="NC_007384.1"/>
</dbReference>
<dbReference type="SMR" id="Q3YVP5"/>
<dbReference type="GeneID" id="93778226"/>
<dbReference type="KEGG" id="ssn:SSON_3878"/>
<dbReference type="HOGENOM" id="CLU_007831_2_2_6"/>
<dbReference type="Proteomes" id="UP000002529">
    <property type="component" value="Chromosome"/>
</dbReference>
<dbReference type="GO" id="GO:0005829">
    <property type="term" value="C:cytosol"/>
    <property type="evidence" value="ECO:0007669"/>
    <property type="project" value="TreeGrafter"/>
</dbReference>
<dbReference type="GO" id="GO:0050660">
    <property type="term" value="F:flavin adenine dinucleotide binding"/>
    <property type="evidence" value="ECO:0007669"/>
    <property type="project" value="UniProtKB-UniRule"/>
</dbReference>
<dbReference type="GO" id="GO:0030488">
    <property type="term" value="P:tRNA methylation"/>
    <property type="evidence" value="ECO:0007669"/>
    <property type="project" value="TreeGrafter"/>
</dbReference>
<dbReference type="GO" id="GO:0002098">
    <property type="term" value="P:tRNA wobble uridine modification"/>
    <property type="evidence" value="ECO:0007669"/>
    <property type="project" value="InterPro"/>
</dbReference>
<dbReference type="FunFam" id="1.10.10.1800:FF:000001">
    <property type="entry name" value="tRNA uridine 5-carboxymethylaminomethyl modification enzyme MnmG"/>
    <property type="match status" value="1"/>
</dbReference>
<dbReference type="FunFam" id="1.10.150.570:FF:000001">
    <property type="entry name" value="tRNA uridine 5-carboxymethylaminomethyl modification enzyme MnmG"/>
    <property type="match status" value="1"/>
</dbReference>
<dbReference type="FunFam" id="3.50.50.60:FF:000002">
    <property type="entry name" value="tRNA uridine 5-carboxymethylaminomethyl modification enzyme MnmG"/>
    <property type="match status" value="1"/>
</dbReference>
<dbReference type="FunFam" id="3.50.50.60:FF:000010">
    <property type="entry name" value="tRNA uridine 5-carboxymethylaminomethyl modification enzyme MnmG"/>
    <property type="match status" value="1"/>
</dbReference>
<dbReference type="Gene3D" id="3.50.50.60">
    <property type="entry name" value="FAD/NAD(P)-binding domain"/>
    <property type="match status" value="2"/>
</dbReference>
<dbReference type="Gene3D" id="1.10.150.570">
    <property type="entry name" value="GidA associated domain, C-terminal subdomain"/>
    <property type="match status" value="1"/>
</dbReference>
<dbReference type="Gene3D" id="1.10.10.1800">
    <property type="entry name" value="tRNA uridine 5-carboxymethylaminomethyl modification enzyme MnmG/GidA"/>
    <property type="match status" value="1"/>
</dbReference>
<dbReference type="HAMAP" id="MF_00129">
    <property type="entry name" value="MnmG_GidA"/>
    <property type="match status" value="1"/>
</dbReference>
<dbReference type="InterPro" id="IPR036188">
    <property type="entry name" value="FAD/NAD-bd_sf"/>
</dbReference>
<dbReference type="InterPro" id="IPR049312">
    <property type="entry name" value="GIDA_C_N"/>
</dbReference>
<dbReference type="InterPro" id="IPR004416">
    <property type="entry name" value="MnmG"/>
</dbReference>
<dbReference type="InterPro" id="IPR002218">
    <property type="entry name" value="MnmG-rel"/>
</dbReference>
<dbReference type="InterPro" id="IPR020595">
    <property type="entry name" value="MnmG-rel_CS"/>
</dbReference>
<dbReference type="InterPro" id="IPR026904">
    <property type="entry name" value="MnmG_C"/>
</dbReference>
<dbReference type="InterPro" id="IPR047001">
    <property type="entry name" value="MnmG_C_subdom"/>
</dbReference>
<dbReference type="InterPro" id="IPR044920">
    <property type="entry name" value="MnmG_C_subdom_sf"/>
</dbReference>
<dbReference type="InterPro" id="IPR040131">
    <property type="entry name" value="MnmG_N"/>
</dbReference>
<dbReference type="NCBIfam" id="TIGR00136">
    <property type="entry name" value="mnmG_gidA"/>
    <property type="match status" value="1"/>
</dbReference>
<dbReference type="PANTHER" id="PTHR11806">
    <property type="entry name" value="GLUCOSE INHIBITED DIVISION PROTEIN A"/>
    <property type="match status" value="1"/>
</dbReference>
<dbReference type="PANTHER" id="PTHR11806:SF0">
    <property type="entry name" value="PROTEIN MTO1 HOMOLOG, MITOCHONDRIAL"/>
    <property type="match status" value="1"/>
</dbReference>
<dbReference type="Pfam" id="PF01134">
    <property type="entry name" value="GIDA"/>
    <property type="match status" value="1"/>
</dbReference>
<dbReference type="Pfam" id="PF21680">
    <property type="entry name" value="GIDA_C_1st"/>
    <property type="match status" value="1"/>
</dbReference>
<dbReference type="Pfam" id="PF13932">
    <property type="entry name" value="SAM_GIDA_C"/>
    <property type="match status" value="1"/>
</dbReference>
<dbReference type="SMART" id="SM01228">
    <property type="entry name" value="GIDA_assoc_3"/>
    <property type="match status" value="1"/>
</dbReference>
<dbReference type="SUPFAM" id="SSF51905">
    <property type="entry name" value="FAD/NAD(P)-binding domain"/>
    <property type="match status" value="1"/>
</dbReference>
<dbReference type="PROSITE" id="PS01280">
    <property type="entry name" value="GIDA_1"/>
    <property type="match status" value="1"/>
</dbReference>
<proteinExistence type="inferred from homology"/>
<keyword id="KW-0963">Cytoplasm</keyword>
<keyword id="KW-0274">FAD</keyword>
<keyword id="KW-0285">Flavoprotein</keyword>
<keyword id="KW-0520">NAD</keyword>
<keyword id="KW-1185">Reference proteome</keyword>
<keyword id="KW-0819">tRNA processing</keyword>
<accession>Q3YVP5</accession>
<feature type="chain" id="PRO_1000016681" description="tRNA uridine 5-carboxymethylaminomethyl modification enzyme MnmG">
    <location>
        <begin position="1"/>
        <end position="629"/>
    </location>
</feature>
<feature type="binding site" evidence="1">
    <location>
        <begin position="13"/>
        <end position="18"/>
    </location>
    <ligand>
        <name>FAD</name>
        <dbReference type="ChEBI" id="CHEBI:57692"/>
    </ligand>
</feature>
<feature type="binding site" evidence="1">
    <location>
        <position position="125"/>
    </location>
    <ligand>
        <name>FAD</name>
        <dbReference type="ChEBI" id="CHEBI:57692"/>
    </ligand>
</feature>
<feature type="binding site" evidence="1">
    <location>
        <position position="180"/>
    </location>
    <ligand>
        <name>FAD</name>
        <dbReference type="ChEBI" id="CHEBI:57692"/>
    </ligand>
</feature>
<feature type="binding site" evidence="1">
    <location>
        <begin position="273"/>
        <end position="287"/>
    </location>
    <ligand>
        <name>NAD(+)</name>
        <dbReference type="ChEBI" id="CHEBI:57540"/>
    </ligand>
</feature>
<feature type="binding site" evidence="1">
    <location>
        <position position="370"/>
    </location>
    <ligand>
        <name>FAD</name>
        <dbReference type="ChEBI" id="CHEBI:57692"/>
    </ligand>
</feature>
<organism>
    <name type="scientific">Shigella sonnei (strain Ss046)</name>
    <dbReference type="NCBI Taxonomy" id="300269"/>
    <lineage>
        <taxon>Bacteria</taxon>
        <taxon>Pseudomonadati</taxon>
        <taxon>Pseudomonadota</taxon>
        <taxon>Gammaproteobacteria</taxon>
        <taxon>Enterobacterales</taxon>
        <taxon>Enterobacteriaceae</taxon>
        <taxon>Shigella</taxon>
    </lineage>
</organism>